<protein>
    <recommendedName>
        <fullName evidence="1">Tol-Pal system protein TolB</fullName>
    </recommendedName>
</protein>
<reference key="1">
    <citation type="journal article" date="2009" name="Proc. Natl. Acad. Sci. U.S.A.">
        <title>The mosaic genome structure of the Wolbachia wRi strain infecting Drosophila simulans.</title>
        <authorList>
            <person name="Klasson L."/>
            <person name="Westberg J."/>
            <person name="Sapountzis P."/>
            <person name="Naeslund K."/>
            <person name="Lutnaes Y."/>
            <person name="Darby A.C."/>
            <person name="Veneti Z."/>
            <person name="Chen L."/>
            <person name="Braig H.R."/>
            <person name="Garrett R."/>
            <person name="Bourtzis K."/>
            <person name="Andersson S.G."/>
        </authorList>
    </citation>
    <scope>NUCLEOTIDE SEQUENCE [LARGE SCALE GENOMIC DNA]</scope>
    <source>
        <strain>wRi</strain>
    </source>
</reference>
<gene>
    <name evidence="1" type="primary">tolB</name>
    <name type="ordered locus">WRi_000320</name>
</gene>
<evidence type="ECO:0000255" key="1">
    <source>
        <dbReference type="HAMAP-Rule" id="MF_00671"/>
    </source>
</evidence>
<feature type="signal peptide" evidence="1">
    <location>
        <begin position="1"/>
        <end position="21"/>
    </location>
</feature>
<feature type="chain" id="PRO_1000147666" description="Tol-Pal system protein TolB" evidence="1">
    <location>
        <begin position="22"/>
        <end position="420"/>
    </location>
</feature>
<keyword id="KW-0131">Cell cycle</keyword>
<keyword id="KW-0132">Cell division</keyword>
<keyword id="KW-0574">Periplasm</keyword>
<keyword id="KW-0732">Signal</keyword>
<accession>C0R560</accession>
<name>TOLB_WOLWR</name>
<sequence>MKLFVHLVLFISLFIPYFTKAALYVDIKKSSVGNIGLVVSKCTCKTALESELSENIAKVIGTNLSNCGLFNVKRGAEAESKSWKSDTVVTVSLSEISGSALELSFRLFDTFTKRELLTQSVVFPAKDWRKIGHLVSDVIHDRLIGEKGHFNTKITYIAEEKDSNYKSVRKIAVMNQDGSNIKYLTNGDRFVSTPRFSPNGKGIVYISYANGKSYIILKNLKDNTESIISTFEGVVSAPRFSPDGKSLLISHSLGGETNILSLDLSSKRTKKITKGSAISTSPSFSPDQKYMAFSSDISGSQQLYVIDFTNKSKKPKRISFGSGRYATPVWSPKGDLIAFTKIQSGKFYIGVMKPDGKEERLLSEGHKIESPAWLPNGREIIFTRTESPSNSKLYLVDLVKKNQKMVSTPTNASLPDWSYF</sequence>
<comment type="function">
    <text evidence="1">Part of the Tol-Pal system, which plays a role in outer membrane invagination during cell division and is important for maintaining outer membrane integrity.</text>
</comment>
<comment type="subunit">
    <text evidence="1">The Tol-Pal system is composed of five core proteins: the inner membrane proteins TolA, TolQ and TolR, the periplasmic protein TolB and the outer membrane protein Pal. They form a network linking the inner and outer membranes and the peptidoglycan layer.</text>
</comment>
<comment type="subcellular location">
    <subcellularLocation>
        <location evidence="1">Periplasm</location>
    </subcellularLocation>
</comment>
<comment type="similarity">
    <text evidence="1">Belongs to the TolB family.</text>
</comment>
<proteinExistence type="inferred from homology"/>
<dbReference type="EMBL" id="CP001391">
    <property type="protein sequence ID" value="ACN94902.1"/>
    <property type="molecule type" value="Genomic_DNA"/>
</dbReference>
<dbReference type="RefSeq" id="WP_007548937.1">
    <property type="nucleotide sequence ID" value="NZ_MKIF01000138.1"/>
</dbReference>
<dbReference type="SMR" id="C0R560"/>
<dbReference type="STRING" id="66084.WRi_000320"/>
<dbReference type="KEGG" id="wri:WRi_000320"/>
<dbReference type="HOGENOM" id="CLU_047123_0_0_5"/>
<dbReference type="Proteomes" id="UP000001293">
    <property type="component" value="Chromosome"/>
</dbReference>
<dbReference type="GO" id="GO:0042597">
    <property type="term" value="C:periplasmic space"/>
    <property type="evidence" value="ECO:0007669"/>
    <property type="project" value="UniProtKB-SubCell"/>
</dbReference>
<dbReference type="GO" id="GO:0051301">
    <property type="term" value="P:cell division"/>
    <property type="evidence" value="ECO:0007669"/>
    <property type="project" value="UniProtKB-UniRule"/>
</dbReference>
<dbReference type="GO" id="GO:0017038">
    <property type="term" value="P:protein import"/>
    <property type="evidence" value="ECO:0007669"/>
    <property type="project" value="InterPro"/>
</dbReference>
<dbReference type="Gene3D" id="2.120.10.30">
    <property type="entry name" value="TolB, C-terminal domain"/>
    <property type="match status" value="1"/>
</dbReference>
<dbReference type="Gene3D" id="3.40.50.10070">
    <property type="entry name" value="TolB, N-terminal domain"/>
    <property type="match status" value="1"/>
</dbReference>
<dbReference type="HAMAP" id="MF_00671">
    <property type="entry name" value="TolB"/>
    <property type="match status" value="1"/>
</dbReference>
<dbReference type="InterPro" id="IPR011042">
    <property type="entry name" value="6-blade_b-propeller_TolB-like"/>
</dbReference>
<dbReference type="InterPro" id="IPR011659">
    <property type="entry name" value="PD40"/>
</dbReference>
<dbReference type="InterPro" id="IPR014167">
    <property type="entry name" value="Tol-Pal_TolB"/>
</dbReference>
<dbReference type="InterPro" id="IPR007195">
    <property type="entry name" value="TolB_N"/>
</dbReference>
<dbReference type="PANTHER" id="PTHR36842:SF1">
    <property type="entry name" value="PROTEIN TOLB"/>
    <property type="match status" value="1"/>
</dbReference>
<dbReference type="PANTHER" id="PTHR36842">
    <property type="entry name" value="PROTEIN TOLB HOMOLOG"/>
    <property type="match status" value="1"/>
</dbReference>
<dbReference type="Pfam" id="PF07676">
    <property type="entry name" value="PD40"/>
    <property type="match status" value="5"/>
</dbReference>
<dbReference type="Pfam" id="PF04052">
    <property type="entry name" value="TolB_N"/>
    <property type="match status" value="1"/>
</dbReference>
<dbReference type="SUPFAM" id="SSF52964">
    <property type="entry name" value="TolB, N-terminal domain"/>
    <property type="match status" value="1"/>
</dbReference>
<dbReference type="SUPFAM" id="SSF69304">
    <property type="entry name" value="Tricorn protease N-terminal domain"/>
    <property type="match status" value="1"/>
</dbReference>
<organism>
    <name type="scientific">Wolbachia sp. subsp. Drosophila simulans (strain wRi)</name>
    <dbReference type="NCBI Taxonomy" id="66084"/>
    <lineage>
        <taxon>Bacteria</taxon>
        <taxon>Pseudomonadati</taxon>
        <taxon>Pseudomonadota</taxon>
        <taxon>Alphaproteobacteria</taxon>
        <taxon>Rickettsiales</taxon>
        <taxon>Anaplasmataceae</taxon>
        <taxon>Wolbachieae</taxon>
        <taxon>Wolbachia</taxon>
    </lineage>
</organism>